<keyword id="KW-1185">Reference proteome</keyword>
<keyword id="KW-0686">Riboflavin biosynthesis</keyword>
<keyword id="KW-0808">Transferase</keyword>
<feature type="chain" id="PRO_0000134826" description="6,7-dimethyl-8-ribityllumazine synthase">
    <location>
        <begin position="1"/>
        <end position="156"/>
    </location>
</feature>
<feature type="active site" description="Proton donor" evidence="1">
    <location>
        <position position="89"/>
    </location>
</feature>
<feature type="binding site" evidence="1">
    <location>
        <position position="22"/>
    </location>
    <ligand>
        <name>5-amino-6-(D-ribitylamino)uracil</name>
        <dbReference type="ChEBI" id="CHEBI:15934"/>
    </ligand>
</feature>
<feature type="binding site" evidence="1">
    <location>
        <begin position="57"/>
        <end position="59"/>
    </location>
    <ligand>
        <name>5-amino-6-(D-ribitylamino)uracil</name>
        <dbReference type="ChEBI" id="CHEBI:15934"/>
    </ligand>
</feature>
<feature type="binding site" evidence="1">
    <location>
        <begin position="81"/>
        <end position="83"/>
    </location>
    <ligand>
        <name>5-amino-6-(D-ribitylamino)uracil</name>
        <dbReference type="ChEBI" id="CHEBI:15934"/>
    </ligand>
</feature>
<feature type="binding site" evidence="1">
    <location>
        <begin position="86"/>
        <end position="87"/>
    </location>
    <ligand>
        <name>(2S)-2-hydroxy-3-oxobutyl phosphate</name>
        <dbReference type="ChEBI" id="CHEBI:58830"/>
    </ligand>
</feature>
<feature type="binding site" evidence="1">
    <location>
        <position position="114"/>
    </location>
    <ligand>
        <name>5-amino-6-(D-ribitylamino)uracil</name>
        <dbReference type="ChEBI" id="CHEBI:15934"/>
    </ligand>
</feature>
<feature type="binding site" evidence="1">
    <location>
        <position position="128"/>
    </location>
    <ligand>
        <name>(2S)-2-hydroxy-3-oxobutyl phosphate</name>
        <dbReference type="ChEBI" id="CHEBI:58830"/>
    </ligand>
</feature>
<name>RISB_VIBCH</name>
<sequence length="156" mass="16433">MKVIEGGFPAPNAKIAIVISRFNSFINESLLSGAIDTLKRHGQISDDNITVVRCPGAVELPLVAQRVAKTGDYDAIVSLGCVIRGGTPHFDYVCSEMNKGLAQVSLEFSIPVAFGVLTVDTIDQAIERAGTKAGNKGAEAALSALEMINVLSEIDS</sequence>
<evidence type="ECO:0000255" key="1">
    <source>
        <dbReference type="HAMAP-Rule" id="MF_00178"/>
    </source>
</evidence>
<evidence type="ECO:0000305" key="2"/>
<comment type="function">
    <text evidence="1">Catalyzes the formation of 6,7-dimethyl-8-ribityllumazine by condensation of 5-amino-6-(D-ribitylamino)uracil with 3,4-dihydroxy-2-butanone 4-phosphate. This is the penultimate step in the biosynthesis of riboflavin.</text>
</comment>
<comment type="catalytic activity">
    <reaction evidence="1">
        <text>(2S)-2-hydroxy-3-oxobutyl phosphate + 5-amino-6-(D-ribitylamino)uracil = 6,7-dimethyl-8-(1-D-ribityl)lumazine + phosphate + 2 H2O + H(+)</text>
        <dbReference type="Rhea" id="RHEA:26152"/>
        <dbReference type="ChEBI" id="CHEBI:15377"/>
        <dbReference type="ChEBI" id="CHEBI:15378"/>
        <dbReference type="ChEBI" id="CHEBI:15934"/>
        <dbReference type="ChEBI" id="CHEBI:43474"/>
        <dbReference type="ChEBI" id="CHEBI:58201"/>
        <dbReference type="ChEBI" id="CHEBI:58830"/>
        <dbReference type="EC" id="2.5.1.78"/>
    </reaction>
</comment>
<comment type="pathway">
    <text evidence="1">Cofactor biosynthesis; riboflavin biosynthesis; riboflavin from 2-hydroxy-3-oxobutyl phosphate and 5-amino-6-(D-ribitylamino)uracil: step 1/2.</text>
</comment>
<comment type="subunit">
    <text evidence="1">Forms an icosahedral capsid composed of 60 subunits, arranged as a dodecamer of pentamers.</text>
</comment>
<comment type="similarity">
    <text evidence="1">Belongs to the DMRL synthase family.</text>
</comment>
<comment type="sequence caution" evidence="2">
    <conflict type="erroneous initiation">
        <sequence resource="EMBL-CDS" id="AAF95412"/>
    </conflict>
</comment>
<organism>
    <name type="scientific">Vibrio cholerae serotype O1 (strain ATCC 39315 / El Tor Inaba N16961)</name>
    <dbReference type="NCBI Taxonomy" id="243277"/>
    <lineage>
        <taxon>Bacteria</taxon>
        <taxon>Pseudomonadati</taxon>
        <taxon>Pseudomonadota</taxon>
        <taxon>Gammaproteobacteria</taxon>
        <taxon>Vibrionales</taxon>
        <taxon>Vibrionaceae</taxon>
        <taxon>Vibrio</taxon>
    </lineage>
</organism>
<reference key="1">
    <citation type="journal article" date="2000" name="Nature">
        <title>DNA sequence of both chromosomes of the cholera pathogen Vibrio cholerae.</title>
        <authorList>
            <person name="Heidelberg J.F."/>
            <person name="Eisen J.A."/>
            <person name="Nelson W.C."/>
            <person name="Clayton R.A."/>
            <person name="Gwinn M.L."/>
            <person name="Dodson R.J."/>
            <person name="Haft D.H."/>
            <person name="Hickey E.K."/>
            <person name="Peterson J.D."/>
            <person name="Umayam L.A."/>
            <person name="Gill S.R."/>
            <person name="Nelson K.E."/>
            <person name="Read T.D."/>
            <person name="Tettelin H."/>
            <person name="Richardson D.L."/>
            <person name="Ermolaeva M.D."/>
            <person name="Vamathevan J.J."/>
            <person name="Bass S."/>
            <person name="Qin H."/>
            <person name="Dragoi I."/>
            <person name="Sellers P."/>
            <person name="McDonald L.A."/>
            <person name="Utterback T.R."/>
            <person name="Fleischmann R.D."/>
            <person name="Nierman W.C."/>
            <person name="White O."/>
            <person name="Salzberg S.L."/>
            <person name="Smith H.O."/>
            <person name="Colwell R.R."/>
            <person name="Mekalanos J.J."/>
            <person name="Venter J.C."/>
            <person name="Fraser C.M."/>
        </authorList>
    </citation>
    <scope>NUCLEOTIDE SEQUENCE [LARGE SCALE GENOMIC DNA]</scope>
    <source>
        <strain>ATCC 39315 / El Tor Inaba N16961</strain>
    </source>
</reference>
<protein>
    <recommendedName>
        <fullName evidence="1">6,7-dimethyl-8-ribityllumazine synthase</fullName>
        <shortName evidence="1">DMRL synthase</shortName>
        <shortName evidence="1">LS</shortName>
        <shortName evidence="1">Lumazine synthase</shortName>
        <ecNumber evidence="1">2.5.1.78</ecNumber>
    </recommendedName>
</protein>
<gene>
    <name evidence="1" type="primary">ribH</name>
    <name type="ordered locus">VC_2268</name>
</gene>
<proteinExistence type="inferred from homology"/>
<accession>Q9KPU4</accession>
<dbReference type="EC" id="2.5.1.78" evidence="1"/>
<dbReference type="EMBL" id="AE003852">
    <property type="protein sequence ID" value="AAF95412.1"/>
    <property type="status" value="ALT_INIT"/>
    <property type="molecule type" value="Genomic_DNA"/>
</dbReference>
<dbReference type="PIR" id="C82098">
    <property type="entry name" value="C82098"/>
</dbReference>
<dbReference type="RefSeq" id="NP_231899.2">
    <property type="nucleotide sequence ID" value="NC_002505.1"/>
</dbReference>
<dbReference type="SMR" id="Q9KPU4"/>
<dbReference type="STRING" id="243277.VC_2268"/>
<dbReference type="DNASU" id="2613190"/>
<dbReference type="EnsemblBacteria" id="AAF95412">
    <property type="protein sequence ID" value="AAF95412"/>
    <property type="gene ID" value="VC_2268"/>
</dbReference>
<dbReference type="KEGG" id="vch:VC_2268"/>
<dbReference type="PATRIC" id="fig|243277.26.peg.2163"/>
<dbReference type="eggNOG" id="COG0054">
    <property type="taxonomic scope" value="Bacteria"/>
</dbReference>
<dbReference type="HOGENOM" id="CLU_089358_1_1_6"/>
<dbReference type="BRENDA" id="2.5.1.78">
    <property type="organism ID" value="6626"/>
</dbReference>
<dbReference type="UniPathway" id="UPA00275">
    <property type="reaction ID" value="UER00404"/>
</dbReference>
<dbReference type="Proteomes" id="UP000000584">
    <property type="component" value="Chromosome 1"/>
</dbReference>
<dbReference type="GO" id="GO:0005737">
    <property type="term" value="C:cytoplasm"/>
    <property type="evidence" value="ECO:0000318"/>
    <property type="project" value="GO_Central"/>
</dbReference>
<dbReference type="GO" id="GO:0005829">
    <property type="term" value="C:cytosol"/>
    <property type="evidence" value="ECO:0000318"/>
    <property type="project" value="GO_Central"/>
</dbReference>
<dbReference type="GO" id="GO:0009349">
    <property type="term" value="C:riboflavin synthase complex"/>
    <property type="evidence" value="ECO:0007669"/>
    <property type="project" value="InterPro"/>
</dbReference>
<dbReference type="GO" id="GO:0000906">
    <property type="term" value="F:6,7-dimethyl-8-ribityllumazine synthase activity"/>
    <property type="evidence" value="ECO:0000318"/>
    <property type="project" value="GO_Central"/>
</dbReference>
<dbReference type="GO" id="GO:0009231">
    <property type="term" value="P:riboflavin biosynthetic process"/>
    <property type="evidence" value="ECO:0000318"/>
    <property type="project" value="GO_Central"/>
</dbReference>
<dbReference type="CDD" id="cd09209">
    <property type="entry name" value="Lumazine_synthase-I"/>
    <property type="match status" value="1"/>
</dbReference>
<dbReference type="FunFam" id="3.40.50.960:FF:000001">
    <property type="entry name" value="6,7-dimethyl-8-ribityllumazine synthase"/>
    <property type="match status" value="1"/>
</dbReference>
<dbReference type="Gene3D" id="3.40.50.960">
    <property type="entry name" value="Lumazine/riboflavin synthase"/>
    <property type="match status" value="1"/>
</dbReference>
<dbReference type="HAMAP" id="MF_00178">
    <property type="entry name" value="Lumazine_synth"/>
    <property type="match status" value="1"/>
</dbReference>
<dbReference type="InterPro" id="IPR034964">
    <property type="entry name" value="LS"/>
</dbReference>
<dbReference type="InterPro" id="IPR002180">
    <property type="entry name" value="LS/RS"/>
</dbReference>
<dbReference type="InterPro" id="IPR036467">
    <property type="entry name" value="LS/RS_sf"/>
</dbReference>
<dbReference type="NCBIfam" id="TIGR00114">
    <property type="entry name" value="lumazine-synth"/>
    <property type="match status" value="1"/>
</dbReference>
<dbReference type="NCBIfam" id="NF000812">
    <property type="entry name" value="PRK00061.1-4"/>
    <property type="match status" value="1"/>
</dbReference>
<dbReference type="PANTHER" id="PTHR21058:SF0">
    <property type="entry name" value="6,7-DIMETHYL-8-RIBITYLLUMAZINE SYNTHASE"/>
    <property type="match status" value="1"/>
</dbReference>
<dbReference type="PANTHER" id="PTHR21058">
    <property type="entry name" value="6,7-DIMETHYL-8-RIBITYLLUMAZINE SYNTHASE DMRL SYNTHASE LUMAZINE SYNTHASE"/>
    <property type="match status" value="1"/>
</dbReference>
<dbReference type="Pfam" id="PF00885">
    <property type="entry name" value="DMRL_synthase"/>
    <property type="match status" value="1"/>
</dbReference>
<dbReference type="SUPFAM" id="SSF52121">
    <property type="entry name" value="Lumazine synthase"/>
    <property type="match status" value="1"/>
</dbReference>